<name>PIMT_MARMM</name>
<sequence>MQLPDPRMIQLVMSLRGGGVTDAKVMGALERTPRHLFVPQRFGDQAYDDRALPIDCGQTISQPLIVALMTQALKLDDRCKVLEIGTGSGYQAAVLARLARRVYSVERYRTLSREAEARFEAMRLTNIVTRIGDGTQGWPEQAPFDRIILTASAPTRPDVILEQLKDGGIAVAPVDRENRQVLVRYARHGDDITETDLMDVRFVPLVKGEARAL</sequence>
<comment type="function">
    <text evidence="1">Catalyzes the methyl esterification of L-isoaspartyl residues in peptides and proteins that result from spontaneous decomposition of normal L-aspartyl and L-asparaginyl residues. It plays a role in the repair and/or degradation of damaged proteins.</text>
</comment>
<comment type="catalytic activity">
    <reaction evidence="1">
        <text>[protein]-L-isoaspartate + S-adenosyl-L-methionine = [protein]-L-isoaspartate alpha-methyl ester + S-adenosyl-L-homocysteine</text>
        <dbReference type="Rhea" id="RHEA:12705"/>
        <dbReference type="Rhea" id="RHEA-COMP:12143"/>
        <dbReference type="Rhea" id="RHEA-COMP:12144"/>
        <dbReference type="ChEBI" id="CHEBI:57856"/>
        <dbReference type="ChEBI" id="CHEBI:59789"/>
        <dbReference type="ChEBI" id="CHEBI:90596"/>
        <dbReference type="ChEBI" id="CHEBI:90598"/>
        <dbReference type="EC" id="2.1.1.77"/>
    </reaction>
</comment>
<comment type="subcellular location">
    <subcellularLocation>
        <location evidence="1">Cytoplasm</location>
    </subcellularLocation>
</comment>
<comment type="similarity">
    <text evidence="1">Belongs to the methyltransferase superfamily. L-isoaspartyl/D-aspartyl protein methyltransferase family.</text>
</comment>
<proteinExistence type="inferred from homology"/>
<reference key="1">
    <citation type="submission" date="2006-08" db="EMBL/GenBank/DDBJ databases">
        <title>Complete sequence of Maricaulis maris MCS10.</title>
        <authorList>
            <consortium name="US DOE Joint Genome Institute"/>
            <person name="Copeland A."/>
            <person name="Lucas S."/>
            <person name="Lapidus A."/>
            <person name="Barry K."/>
            <person name="Detter J.C."/>
            <person name="Glavina del Rio T."/>
            <person name="Hammon N."/>
            <person name="Israni S."/>
            <person name="Dalin E."/>
            <person name="Tice H."/>
            <person name="Pitluck S."/>
            <person name="Saunders E."/>
            <person name="Brettin T."/>
            <person name="Bruce D."/>
            <person name="Han C."/>
            <person name="Tapia R."/>
            <person name="Gilna P."/>
            <person name="Schmutz J."/>
            <person name="Larimer F."/>
            <person name="Land M."/>
            <person name="Hauser L."/>
            <person name="Kyrpides N."/>
            <person name="Mikhailova N."/>
            <person name="Viollier P."/>
            <person name="Stephens C."/>
            <person name="Richardson P."/>
        </authorList>
    </citation>
    <scope>NUCLEOTIDE SEQUENCE [LARGE SCALE GENOMIC DNA]</scope>
    <source>
        <strain>MCS10</strain>
    </source>
</reference>
<gene>
    <name evidence="1" type="primary">pcm</name>
    <name type="ordered locus">Mmar10_1903</name>
</gene>
<protein>
    <recommendedName>
        <fullName evidence="1">Protein-L-isoaspartate O-methyltransferase</fullName>
        <ecNumber evidence="1">2.1.1.77</ecNumber>
    </recommendedName>
    <alternativeName>
        <fullName evidence="1">L-isoaspartyl protein carboxyl methyltransferase</fullName>
    </alternativeName>
    <alternativeName>
        <fullName evidence="1">Protein L-isoaspartyl methyltransferase</fullName>
    </alternativeName>
    <alternativeName>
        <fullName evidence="1">Protein-beta-aspartate methyltransferase</fullName>
        <shortName evidence="1">PIMT</shortName>
    </alternativeName>
</protein>
<keyword id="KW-0963">Cytoplasm</keyword>
<keyword id="KW-0489">Methyltransferase</keyword>
<keyword id="KW-1185">Reference proteome</keyword>
<keyword id="KW-0949">S-adenosyl-L-methionine</keyword>
<keyword id="KW-0808">Transferase</keyword>
<feature type="chain" id="PRO_0000351875" description="Protein-L-isoaspartate O-methyltransferase">
    <location>
        <begin position="1"/>
        <end position="213"/>
    </location>
</feature>
<feature type="active site" evidence="1">
    <location>
        <position position="61"/>
    </location>
</feature>
<evidence type="ECO:0000255" key="1">
    <source>
        <dbReference type="HAMAP-Rule" id="MF_00090"/>
    </source>
</evidence>
<organism>
    <name type="scientific">Maricaulis maris (strain MCS10)</name>
    <name type="common">Caulobacter maris</name>
    <dbReference type="NCBI Taxonomy" id="394221"/>
    <lineage>
        <taxon>Bacteria</taxon>
        <taxon>Pseudomonadati</taxon>
        <taxon>Pseudomonadota</taxon>
        <taxon>Alphaproteobacteria</taxon>
        <taxon>Maricaulales</taxon>
        <taxon>Maricaulaceae</taxon>
        <taxon>Maricaulis</taxon>
    </lineage>
</organism>
<accession>Q0ANE2</accession>
<dbReference type="EC" id="2.1.1.77" evidence="1"/>
<dbReference type="EMBL" id="CP000449">
    <property type="protein sequence ID" value="ABI66195.1"/>
    <property type="molecule type" value="Genomic_DNA"/>
</dbReference>
<dbReference type="RefSeq" id="WP_011643840.1">
    <property type="nucleotide sequence ID" value="NC_008347.1"/>
</dbReference>
<dbReference type="SMR" id="Q0ANE2"/>
<dbReference type="STRING" id="394221.Mmar10_1903"/>
<dbReference type="KEGG" id="mmr:Mmar10_1903"/>
<dbReference type="eggNOG" id="COG2518">
    <property type="taxonomic scope" value="Bacteria"/>
</dbReference>
<dbReference type="HOGENOM" id="CLU_055432_2_0_5"/>
<dbReference type="OrthoDB" id="9810066at2"/>
<dbReference type="Proteomes" id="UP000001964">
    <property type="component" value="Chromosome"/>
</dbReference>
<dbReference type="GO" id="GO:0005737">
    <property type="term" value="C:cytoplasm"/>
    <property type="evidence" value="ECO:0007669"/>
    <property type="project" value="UniProtKB-SubCell"/>
</dbReference>
<dbReference type="GO" id="GO:0004719">
    <property type="term" value="F:protein-L-isoaspartate (D-aspartate) O-methyltransferase activity"/>
    <property type="evidence" value="ECO:0007669"/>
    <property type="project" value="UniProtKB-UniRule"/>
</dbReference>
<dbReference type="GO" id="GO:0032259">
    <property type="term" value="P:methylation"/>
    <property type="evidence" value="ECO:0007669"/>
    <property type="project" value="UniProtKB-KW"/>
</dbReference>
<dbReference type="GO" id="GO:0036211">
    <property type="term" value="P:protein modification process"/>
    <property type="evidence" value="ECO:0007669"/>
    <property type="project" value="UniProtKB-UniRule"/>
</dbReference>
<dbReference type="GO" id="GO:0030091">
    <property type="term" value="P:protein repair"/>
    <property type="evidence" value="ECO:0007669"/>
    <property type="project" value="UniProtKB-UniRule"/>
</dbReference>
<dbReference type="CDD" id="cd02440">
    <property type="entry name" value="AdoMet_MTases"/>
    <property type="match status" value="1"/>
</dbReference>
<dbReference type="FunFam" id="3.40.50.150:FF:000010">
    <property type="entry name" value="Protein-L-isoaspartate O-methyltransferase"/>
    <property type="match status" value="1"/>
</dbReference>
<dbReference type="Gene3D" id="3.40.50.150">
    <property type="entry name" value="Vaccinia Virus protein VP39"/>
    <property type="match status" value="1"/>
</dbReference>
<dbReference type="HAMAP" id="MF_00090">
    <property type="entry name" value="PIMT"/>
    <property type="match status" value="1"/>
</dbReference>
<dbReference type="InterPro" id="IPR000682">
    <property type="entry name" value="PCMT"/>
</dbReference>
<dbReference type="InterPro" id="IPR029063">
    <property type="entry name" value="SAM-dependent_MTases_sf"/>
</dbReference>
<dbReference type="NCBIfam" id="TIGR00080">
    <property type="entry name" value="pimt"/>
    <property type="match status" value="1"/>
</dbReference>
<dbReference type="NCBIfam" id="NF001453">
    <property type="entry name" value="PRK00312.1"/>
    <property type="match status" value="1"/>
</dbReference>
<dbReference type="PANTHER" id="PTHR11579">
    <property type="entry name" value="PROTEIN-L-ISOASPARTATE O-METHYLTRANSFERASE"/>
    <property type="match status" value="1"/>
</dbReference>
<dbReference type="PANTHER" id="PTHR11579:SF0">
    <property type="entry name" value="PROTEIN-L-ISOASPARTATE(D-ASPARTATE) O-METHYLTRANSFERASE"/>
    <property type="match status" value="1"/>
</dbReference>
<dbReference type="Pfam" id="PF01135">
    <property type="entry name" value="PCMT"/>
    <property type="match status" value="1"/>
</dbReference>
<dbReference type="SUPFAM" id="SSF53335">
    <property type="entry name" value="S-adenosyl-L-methionine-dependent methyltransferases"/>
    <property type="match status" value="1"/>
</dbReference>
<dbReference type="PROSITE" id="PS01279">
    <property type="entry name" value="PCMT"/>
    <property type="match status" value="1"/>
</dbReference>